<accession>A4IXE9</accession>
<evidence type="ECO:0000255" key="1">
    <source>
        <dbReference type="HAMAP-Rule" id="MF_01147"/>
    </source>
</evidence>
<gene>
    <name evidence="1" type="primary">lgt</name>
    <name type="ordered locus">FTW_0718</name>
</gene>
<sequence>MLQYPHINPVALQLGPIKIHWYGLMYLLGIFAGWYLTRYRAKVKPWAPIKPEQVGDLTFYVALGVILGGRIGYIIFYNLPYYFHNPSQMFFLWDGGMSFHGGFIGVLIAFALFARKIGANFFDLGEFVAPVIPIGLGAGRIGNFINGELWGKVTDSPLGMVFPTGGPLPRYPSQLFEFFFEGVVLFSVLWLVTIKKRPRYLVLGLFMFLYGCARFICEFFRQPDPQYGYIFFNWMTMGQILSIPMILLGAVILIAVFIKTRKNKCENI</sequence>
<feature type="chain" id="PRO_1000053436" description="Phosphatidylglycerol--prolipoprotein diacylglyceryl transferase">
    <location>
        <begin position="1"/>
        <end position="268"/>
    </location>
</feature>
<feature type="transmembrane region" description="Helical" evidence="1">
    <location>
        <begin position="14"/>
        <end position="34"/>
    </location>
</feature>
<feature type="transmembrane region" description="Helical" evidence="1">
    <location>
        <begin position="57"/>
        <end position="77"/>
    </location>
</feature>
<feature type="transmembrane region" description="Helical" evidence="1">
    <location>
        <begin position="90"/>
        <end position="110"/>
    </location>
</feature>
<feature type="transmembrane region" description="Helical" evidence="1">
    <location>
        <begin position="117"/>
        <end position="137"/>
    </location>
</feature>
<feature type="transmembrane region" description="Helical" evidence="1">
    <location>
        <begin position="174"/>
        <end position="194"/>
    </location>
</feature>
<feature type="transmembrane region" description="Helical" evidence="1">
    <location>
        <begin position="200"/>
        <end position="220"/>
    </location>
</feature>
<feature type="transmembrane region" description="Helical" evidence="1">
    <location>
        <begin position="238"/>
        <end position="258"/>
    </location>
</feature>
<feature type="binding site" evidence="1">
    <location>
        <position position="140"/>
    </location>
    <ligand>
        <name>a 1,2-diacyl-sn-glycero-3-phospho-(1'-sn-glycerol)</name>
        <dbReference type="ChEBI" id="CHEBI:64716"/>
    </ligand>
</feature>
<comment type="function">
    <text evidence="1">Catalyzes the transfer of the diacylglyceryl group from phosphatidylglycerol to the sulfhydryl group of the N-terminal cysteine of a prolipoprotein, the first step in the formation of mature lipoproteins.</text>
</comment>
<comment type="catalytic activity">
    <reaction evidence="1">
        <text>L-cysteinyl-[prolipoprotein] + a 1,2-diacyl-sn-glycero-3-phospho-(1'-sn-glycerol) = an S-1,2-diacyl-sn-glyceryl-L-cysteinyl-[prolipoprotein] + sn-glycerol 1-phosphate + H(+)</text>
        <dbReference type="Rhea" id="RHEA:56712"/>
        <dbReference type="Rhea" id="RHEA-COMP:14679"/>
        <dbReference type="Rhea" id="RHEA-COMP:14680"/>
        <dbReference type="ChEBI" id="CHEBI:15378"/>
        <dbReference type="ChEBI" id="CHEBI:29950"/>
        <dbReference type="ChEBI" id="CHEBI:57685"/>
        <dbReference type="ChEBI" id="CHEBI:64716"/>
        <dbReference type="ChEBI" id="CHEBI:140658"/>
        <dbReference type="EC" id="2.5.1.145"/>
    </reaction>
</comment>
<comment type="pathway">
    <text evidence="1">Protein modification; lipoprotein biosynthesis (diacylglyceryl transfer).</text>
</comment>
<comment type="subcellular location">
    <subcellularLocation>
        <location evidence="1">Cell inner membrane</location>
        <topology evidence="1">Multi-pass membrane protein</topology>
    </subcellularLocation>
</comment>
<comment type="similarity">
    <text evidence="1">Belongs to the Lgt family.</text>
</comment>
<keyword id="KW-0997">Cell inner membrane</keyword>
<keyword id="KW-1003">Cell membrane</keyword>
<keyword id="KW-0472">Membrane</keyword>
<keyword id="KW-0808">Transferase</keyword>
<keyword id="KW-0812">Transmembrane</keyword>
<keyword id="KW-1133">Transmembrane helix</keyword>
<reference key="1">
    <citation type="journal article" date="2007" name="PLoS ONE">
        <title>Complete genomic characterization of a pathogenic A.II strain of Francisella tularensis subspecies tularensis.</title>
        <authorList>
            <person name="Beckstrom-Sternberg S.M."/>
            <person name="Auerbach R.K."/>
            <person name="Godbole S."/>
            <person name="Pearson J.V."/>
            <person name="Beckstrom-Sternberg J.S."/>
            <person name="Deng Z."/>
            <person name="Munk C."/>
            <person name="Kubota K."/>
            <person name="Zhou Y."/>
            <person name="Bruce D."/>
            <person name="Noronha J."/>
            <person name="Scheuermann R.H."/>
            <person name="Wang A."/>
            <person name="Wei X."/>
            <person name="Wang J."/>
            <person name="Hao J."/>
            <person name="Wagner D.M."/>
            <person name="Brettin T.S."/>
            <person name="Brown N."/>
            <person name="Gilna P."/>
            <person name="Keim P.S."/>
        </authorList>
    </citation>
    <scope>NUCLEOTIDE SEQUENCE [LARGE SCALE GENOMIC DNA]</scope>
    <source>
        <strain>WY96-3418</strain>
    </source>
</reference>
<dbReference type="EC" id="2.5.1.145" evidence="1"/>
<dbReference type="EMBL" id="CP000608">
    <property type="protein sequence ID" value="ABO46601.1"/>
    <property type="molecule type" value="Genomic_DNA"/>
</dbReference>
<dbReference type="RefSeq" id="WP_003025780.1">
    <property type="nucleotide sequence ID" value="NC_009257.1"/>
</dbReference>
<dbReference type="SMR" id="A4IXE9"/>
<dbReference type="GeneID" id="75265021"/>
<dbReference type="KEGG" id="ftw:FTW_0718"/>
<dbReference type="HOGENOM" id="CLU_013386_1_0_6"/>
<dbReference type="UniPathway" id="UPA00664"/>
<dbReference type="GO" id="GO:0005886">
    <property type="term" value="C:plasma membrane"/>
    <property type="evidence" value="ECO:0007669"/>
    <property type="project" value="UniProtKB-SubCell"/>
</dbReference>
<dbReference type="GO" id="GO:0008961">
    <property type="term" value="F:phosphatidylglycerol-prolipoprotein diacylglyceryl transferase activity"/>
    <property type="evidence" value="ECO:0007669"/>
    <property type="project" value="UniProtKB-UniRule"/>
</dbReference>
<dbReference type="GO" id="GO:0042158">
    <property type="term" value="P:lipoprotein biosynthetic process"/>
    <property type="evidence" value="ECO:0007669"/>
    <property type="project" value="UniProtKB-UniRule"/>
</dbReference>
<dbReference type="HAMAP" id="MF_01147">
    <property type="entry name" value="Lgt"/>
    <property type="match status" value="1"/>
</dbReference>
<dbReference type="InterPro" id="IPR001640">
    <property type="entry name" value="Lgt"/>
</dbReference>
<dbReference type="NCBIfam" id="TIGR00544">
    <property type="entry name" value="lgt"/>
    <property type="match status" value="1"/>
</dbReference>
<dbReference type="PANTHER" id="PTHR30589:SF0">
    <property type="entry name" value="PHOSPHATIDYLGLYCEROL--PROLIPOPROTEIN DIACYLGLYCERYL TRANSFERASE"/>
    <property type="match status" value="1"/>
</dbReference>
<dbReference type="PANTHER" id="PTHR30589">
    <property type="entry name" value="PROLIPOPROTEIN DIACYLGLYCERYL TRANSFERASE"/>
    <property type="match status" value="1"/>
</dbReference>
<dbReference type="Pfam" id="PF01790">
    <property type="entry name" value="LGT"/>
    <property type="match status" value="1"/>
</dbReference>
<dbReference type="PROSITE" id="PS01311">
    <property type="entry name" value="LGT"/>
    <property type="match status" value="1"/>
</dbReference>
<organism>
    <name type="scientific">Francisella tularensis subsp. tularensis (strain WY96-3418)</name>
    <dbReference type="NCBI Taxonomy" id="418136"/>
    <lineage>
        <taxon>Bacteria</taxon>
        <taxon>Pseudomonadati</taxon>
        <taxon>Pseudomonadota</taxon>
        <taxon>Gammaproteobacteria</taxon>
        <taxon>Thiotrichales</taxon>
        <taxon>Francisellaceae</taxon>
        <taxon>Francisella</taxon>
    </lineage>
</organism>
<protein>
    <recommendedName>
        <fullName evidence="1">Phosphatidylglycerol--prolipoprotein diacylglyceryl transferase</fullName>
        <ecNumber evidence="1">2.5.1.145</ecNumber>
    </recommendedName>
</protein>
<proteinExistence type="inferred from homology"/>
<name>LGT_FRATW</name>